<accession>Q73NE4</accession>
<protein>
    <recommendedName>
        <fullName evidence="1">Tyrosine recombinase XerC</fullName>
    </recommendedName>
</protein>
<gene>
    <name evidence="1" type="primary">xerC</name>
    <name type="ordered locus">TDE_1209</name>
</gene>
<feature type="chain" id="PRO_1000070047" description="Tyrosine recombinase XerC">
    <location>
        <begin position="1"/>
        <end position="305"/>
    </location>
</feature>
<feature type="domain" description="Core-binding (CB)" evidence="3">
    <location>
        <begin position="1"/>
        <end position="84"/>
    </location>
</feature>
<feature type="domain" description="Tyr recombinase" evidence="2">
    <location>
        <begin position="105"/>
        <end position="299"/>
    </location>
</feature>
<feature type="active site" evidence="1">
    <location>
        <position position="146"/>
    </location>
</feature>
<feature type="active site" evidence="1">
    <location>
        <position position="170"/>
    </location>
</feature>
<feature type="active site" evidence="1">
    <location>
        <position position="251"/>
    </location>
</feature>
<feature type="active site" evidence="1">
    <location>
        <position position="254"/>
    </location>
</feature>
<feature type="active site" evidence="1">
    <location>
        <position position="277"/>
    </location>
</feature>
<feature type="active site" description="O-(3'-phospho-DNA)-tyrosine intermediate" evidence="1">
    <location>
        <position position="286"/>
    </location>
</feature>
<proteinExistence type="inferred from homology"/>
<dbReference type="EMBL" id="AE017226">
    <property type="protein sequence ID" value="AAS11727.1"/>
    <property type="molecule type" value="Genomic_DNA"/>
</dbReference>
<dbReference type="RefSeq" id="NP_971816.1">
    <property type="nucleotide sequence ID" value="NC_002967.9"/>
</dbReference>
<dbReference type="RefSeq" id="WP_002678705.1">
    <property type="nucleotide sequence ID" value="NC_002967.9"/>
</dbReference>
<dbReference type="SMR" id="Q73NE4"/>
<dbReference type="STRING" id="243275.TDE_1209"/>
<dbReference type="PaxDb" id="243275-TDE_1209"/>
<dbReference type="GeneID" id="2740103"/>
<dbReference type="KEGG" id="tde:TDE_1209"/>
<dbReference type="PATRIC" id="fig|243275.7.peg.1164"/>
<dbReference type="eggNOG" id="COG4974">
    <property type="taxonomic scope" value="Bacteria"/>
</dbReference>
<dbReference type="HOGENOM" id="CLU_027562_9_2_12"/>
<dbReference type="OrthoDB" id="341301at2"/>
<dbReference type="Proteomes" id="UP000008212">
    <property type="component" value="Chromosome"/>
</dbReference>
<dbReference type="GO" id="GO:0005737">
    <property type="term" value="C:cytoplasm"/>
    <property type="evidence" value="ECO:0007669"/>
    <property type="project" value="UniProtKB-SubCell"/>
</dbReference>
<dbReference type="GO" id="GO:0003677">
    <property type="term" value="F:DNA binding"/>
    <property type="evidence" value="ECO:0007669"/>
    <property type="project" value="UniProtKB-KW"/>
</dbReference>
<dbReference type="GO" id="GO:0009037">
    <property type="term" value="F:tyrosine-based site-specific recombinase activity"/>
    <property type="evidence" value="ECO:0007669"/>
    <property type="project" value="UniProtKB-UniRule"/>
</dbReference>
<dbReference type="GO" id="GO:0051301">
    <property type="term" value="P:cell division"/>
    <property type="evidence" value="ECO:0007669"/>
    <property type="project" value="UniProtKB-KW"/>
</dbReference>
<dbReference type="GO" id="GO:0007059">
    <property type="term" value="P:chromosome segregation"/>
    <property type="evidence" value="ECO:0007669"/>
    <property type="project" value="UniProtKB-UniRule"/>
</dbReference>
<dbReference type="GO" id="GO:0006313">
    <property type="term" value="P:DNA transposition"/>
    <property type="evidence" value="ECO:0007669"/>
    <property type="project" value="UniProtKB-UniRule"/>
</dbReference>
<dbReference type="CDD" id="cd00798">
    <property type="entry name" value="INT_XerDC_C"/>
    <property type="match status" value="1"/>
</dbReference>
<dbReference type="Gene3D" id="1.10.150.130">
    <property type="match status" value="1"/>
</dbReference>
<dbReference type="Gene3D" id="1.10.443.10">
    <property type="entry name" value="Intergrase catalytic core"/>
    <property type="match status" value="1"/>
</dbReference>
<dbReference type="HAMAP" id="MF_01808">
    <property type="entry name" value="Recomb_XerC_XerD"/>
    <property type="match status" value="1"/>
</dbReference>
<dbReference type="InterPro" id="IPR044068">
    <property type="entry name" value="CB"/>
</dbReference>
<dbReference type="InterPro" id="IPR011010">
    <property type="entry name" value="DNA_brk_join_enz"/>
</dbReference>
<dbReference type="InterPro" id="IPR013762">
    <property type="entry name" value="Integrase-like_cat_sf"/>
</dbReference>
<dbReference type="InterPro" id="IPR002104">
    <property type="entry name" value="Integrase_catalytic"/>
</dbReference>
<dbReference type="InterPro" id="IPR010998">
    <property type="entry name" value="Integrase_recombinase_N"/>
</dbReference>
<dbReference type="InterPro" id="IPR004107">
    <property type="entry name" value="Integrase_SAM-like_N"/>
</dbReference>
<dbReference type="InterPro" id="IPR023009">
    <property type="entry name" value="Tyrosine_recombinase_XerC/XerD"/>
</dbReference>
<dbReference type="InterPro" id="IPR050090">
    <property type="entry name" value="Tyrosine_recombinase_XerCD"/>
</dbReference>
<dbReference type="PANTHER" id="PTHR30349">
    <property type="entry name" value="PHAGE INTEGRASE-RELATED"/>
    <property type="match status" value="1"/>
</dbReference>
<dbReference type="PANTHER" id="PTHR30349:SF77">
    <property type="entry name" value="TYROSINE RECOMBINASE XERC"/>
    <property type="match status" value="1"/>
</dbReference>
<dbReference type="Pfam" id="PF02899">
    <property type="entry name" value="Phage_int_SAM_1"/>
    <property type="match status" value="1"/>
</dbReference>
<dbReference type="Pfam" id="PF00589">
    <property type="entry name" value="Phage_integrase"/>
    <property type="match status" value="1"/>
</dbReference>
<dbReference type="SUPFAM" id="SSF56349">
    <property type="entry name" value="DNA breaking-rejoining enzymes"/>
    <property type="match status" value="1"/>
</dbReference>
<dbReference type="PROSITE" id="PS51900">
    <property type="entry name" value="CB"/>
    <property type="match status" value="1"/>
</dbReference>
<dbReference type="PROSITE" id="PS51898">
    <property type="entry name" value="TYR_RECOMBINASE"/>
    <property type="match status" value="1"/>
</dbReference>
<name>XERC_TREDE</name>
<organism>
    <name type="scientific">Treponema denticola (strain ATCC 35405 / DSM 14222 / CIP 103919 / JCM 8153 / KCTC 15104)</name>
    <dbReference type="NCBI Taxonomy" id="243275"/>
    <lineage>
        <taxon>Bacteria</taxon>
        <taxon>Pseudomonadati</taxon>
        <taxon>Spirochaetota</taxon>
        <taxon>Spirochaetia</taxon>
        <taxon>Spirochaetales</taxon>
        <taxon>Treponemataceae</taxon>
        <taxon>Treponema</taxon>
    </lineage>
</organism>
<evidence type="ECO:0000255" key="1">
    <source>
        <dbReference type="HAMAP-Rule" id="MF_01808"/>
    </source>
</evidence>
<evidence type="ECO:0000255" key="2">
    <source>
        <dbReference type="PROSITE-ProRule" id="PRU01246"/>
    </source>
</evidence>
<evidence type="ECO:0000255" key="3">
    <source>
        <dbReference type="PROSITE-ProRule" id="PRU01248"/>
    </source>
</evidence>
<keyword id="KW-0131">Cell cycle</keyword>
<keyword id="KW-0132">Cell division</keyword>
<keyword id="KW-0159">Chromosome partition</keyword>
<keyword id="KW-0963">Cytoplasm</keyword>
<keyword id="KW-0229">DNA integration</keyword>
<keyword id="KW-0233">DNA recombination</keyword>
<keyword id="KW-0238">DNA-binding</keyword>
<keyword id="KW-1185">Reference proteome</keyword>
<sequence>MNEVFESYLTYSAGVRQFTKATIDSYKNDLIIFEEWLKELDLNIFELKASDIRIFIAELADKKIAPASINRMMSTLRGFYKYALRFNLTKMNPISSVRNLKLAQKLPVFMFPKQAQEFCRLPSNAGILWETRDAALFASLYSTGCRVSELAGLDIKDLDKTLSYAIVFGKGKKERKVFFAEFAKEYLREYLKERSDLVEKFKGQVQKDGKGKIRDTLFINQKAQPLTSRGIRYIIDRYVELSPELKHLSPHAFRHSFASTLITRGADIRVVQELLGHESVSTTQRYTHITAEQLQNLYKTAHPHS</sequence>
<comment type="function">
    <text evidence="1">Site-specific tyrosine recombinase, which acts by catalyzing the cutting and rejoining of the recombining DNA molecules. The XerC-XerD complex is essential to convert dimers of the bacterial chromosome into monomers to permit their segregation at cell division. It also contributes to the segregational stability of plasmids.</text>
</comment>
<comment type="subunit">
    <text evidence="1">Forms a cyclic heterotetrameric complex composed of two molecules of XerC and two molecules of XerD.</text>
</comment>
<comment type="subcellular location">
    <subcellularLocation>
        <location evidence="1">Cytoplasm</location>
    </subcellularLocation>
</comment>
<comment type="similarity">
    <text evidence="1">Belongs to the 'phage' integrase family. XerC subfamily.</text>
</comment>
<reference key="1">
    <citation type="journal article" date="2004" name="Proc. Natl. Acad. Sci. U.S.A.">
        <title>Comparison of the genome of the oral pathogen Treponema denticola with other spirochete genomes.</title>
        <authorList>
            <person name="Seshadri R."/>
            <person name="Myers G.S.A."/>
            <person name="Tettelin H."/>
            <person name="Eisen J.A."/>
            <person name="Heidelberg J.F."/>
            <person name="Dodson R.J."/>
            <person name="Davidsen T.M."/>
            <person name="DeBoy R.T."/>
            <person name="Fouts D.E."/>
            <person name="Haft D.H."/>
            <person name="Selengut J."/>
            <person name="Ren Q."/>
            <person name="Brinkac L.M."/>
            <person name="Madupu R."/>
            <person name="Kolonay J.F."/>
            <person name="Durkin S.A."/>
            <person name="Daugherty S.C."/>
            <person name="Shetty J."/>
            <person name="Shvartsbeyn A."/>
            <person name="Gebregeorgis E."/>
            <person name="Geer K."/>
            <person name="Tsegaye G."/>
            <person name="Malek J.A."/>
            <person name="Ayodeji B."/>
            <person name="Shatsman S."/>
            <person name="McLeod M.P."/>
            <person name="Smajs D."/>
            <person name="Howell J.K."/>
            <person name="Pal S."/>
            <person name="Amin A."/>
            <person name="Vashisth P."/>
            <person name="McNeill T.Z."/>
            <person name="Xiang Q."/>
            <person name="Sodergren E."/>
            <person name="Baca E."/>
            <person name="Weinstock G.M."/>
            <person name="Norris S.J."/>
            <person name="Fraser C.M."/>
            <person name="Paulsen I.T."/>
        </authorList>
    </citation>
    <scope>NUCLEOTIDE SEQUENCE [LARGE SCALE GENOMIC DNA]</scope>
    <source>
        <strain>ATCC 35405 / DSM 14222 / CIP 103919 / JCM 8153 / KCTC 15104</strain>
    </source>
</reference>